<gene>
    <name evidence="1" type="primary">rpsH</name>
    <name type="ordered locus">HCH_06202</name>
</gene>
<evidence type="ECO:0000255" key="1">
    <source>
        <dbReference type="HAMAP-Rule" id="MF_01302"/>
    </source>
</evidence>
<evidence type="ECO:0000305" key="2"/>
<reference key="1">
    <citation type="journal article" date="2005" name="Nucleic Acids Res.">
        <title>Genomic blueprint of Hahella chejuensis, a marine microbe producing an algicidal agent.</title>
        <authorList>
            <person name="Jeong H."/>
            <person name="Yim J.H."/>
            <person name="Lee C."/>
            <person name="Choi S.-H."/>
            <person name="Park Y.K."/>
            <person name="Yoon S.H."/>
            <person name="Hur C.-G."/>
            <person name="Kang H.-Y."/>
            <person name="Kim D."/>
            <person name="Lee H.H."/>
            <person name="Park K.H."/>
            <person name="Park S.-H."/>
            <person name="Park H.-S."/>
            <person name="Lee H.K."/>
            <person name="Oh T.K."/>
            <person name="Kim J.F."/>
        </authorList>
    </citation>
    <scope>NUCLEOTIDE SEQUENCE [LARGE SCALE GENOMIC DNA]</scope>
    <source>
        <strain>KCTC 2396</strain>
    </source>
</reference>
<proteinExistence type="inferred from homology"/>
<sequence length="130" mass="14101">MSMQDTLADMFTRIRNAQMAEKETVRMPSSKMKVAVANVLKEEGFITDYKASEEAKPVLEITLKYYQGAPVIENISRASRPGLRQYKAANDLPTVNGGLGIAIVSTSKGVMTDRAARKAGVGGEVICTVF</sequence>
<protein>
    <recommendedName>
        <fullName evidence="1">Small ribosomal subunit protein uS8</fullName>
    </recommendedName>
    <alternativeName>
        <fullName evidence="2">30S ribosomal protein S8</fullName>
    </alternativeName>
</protein>
<dbReference type="EMBL" id="CP000155">
    <property type="protein sequence ID" value="ABC32848.1"/>
    <property type="molecule type" value="Genomic_DNA"/>
</dbReference>
<dbReference type="RefSeq" id="WP_011399906.1">
    <property type="nucleotide sequence ID" value="NC_007645.1"/>
</dbReference>
<dbReference type="SMR" id="Q2S926"/>
<dbReference type="STRING" id="349521.HCH_06202"/>
<dbReference type="KEGG" id="hch:HCH_06202"/>
<dbReference type="eggNOG" id="COG0096">
    <property type="taxonomic scope" value="Bacteria"/>
</dbReference>
<dbReference type="HOGENOM" id="CLU_098428_0_0_6"/>
<dbReference type="OrthoDB" id="9802617at2"/>
<dbReference type="Proteomes" id="UP000000238">
    <property type="component" value="Chromosome"/>
</dbReference>
<dbReference type="GO" id="GO:1990904">
    <property type="term" value="C:ribonucleoprotein complex"/>
    <property type="evidence" value="ECO:0007669"/>
    <property type="project" value="UniProtKB-KW"/>
</dbReference>
<dbReference type="GO" id="GO:0005840">
    <property type="term" value="C:ribosome"/>
    <property type="evidence" value="ECO:0007669"/>
    <property type="project" value="UniProtKB-KW"/>
</dbReference>
<dbReference type="GO" id="GO:0019843">
    <property type="term" value="F:rRNA binding"/>
    <property type="evidence" value="ECO:0007669"/>
    <property type="project" value="UniProtKB-UniRule"/>
</dbReference>
<dbReference type="GO" id="GO:0003735">
    <property type="term" value="F:structural constituent of ribosome"/>
    <property type="evidence" value="ECO:0007669"/>
    <property type="project" value="InterPro"/>
</dbReference>
<dbReference type="GO" id="GO:0006412">
    <property type="term" value="P:translation"/>
    <property type="evidence" value="ECO:0007669"/>
    <property type="project" value="UniProtKB-UniRule"/>
</dbReference>
<dbReference type="FunFam" id="3.30.1370.30:FF:000003">
    <property type="entry name" value="30S ribosomal protein S8"/>
    <property type="match status" value="1"/>
</dbReference>
<dbReference type="FunFam" id="3.30.1490.10:FF:000001">
    <property type="entry name" value="30S ribosomal protein S8"/>
    <property type="match status" value="1"/>
</dbReference>
<dbReference type="Gene3D" id="3.30.1370.30">
    <property type="match status" value="1"/>
</dbReference>
<dbReference type="Gene3D" id="3.30.1490.10">
    <property type="match status" value="1"/>
</dbReference>
<dbReference type="HAMAP" id="MF_01302_B">
    <property type="entry name" value="Ribosomal_uS8_B"/>
    <property type="match status" value="1"/>
</dbReference>
<dbReference type="InterPro" id="IPR000630">
    <property type="entry name" value="Ribosomal_uS8"/>
</dbReference>
<dbReference type="InterPro" id="IPR047863">
    <property type="entry name" value="Ribosomal_uS8_CS"/>
</dbReference>
<dbReference type="InterPro" id="IPR035987">
    <property type="entry name" value="Ribosomal_uS8_sf"/>
</dbReference>
<dbReference type="NCBIfam" id="NF001109">
    <property type="entry name" value="PRK00136.1"/>
    <property type="match status" value="1"/>
</dbReference>
<dbReference type="PANTHER" id="PTHR11758">
    <property type="entry name" value="40S RIBOSOMAL PROTEIN S15A"/>
    <property type="match status" value="1"/>
</dbReference>
<dbReference type="Pfam" id="PF00410">
    <property type="entry name" value="Ribosomal_S8"/>
    <property type="match status" value="1"/>
</dbReference>
<dbReference type="SUPFAM" id="SSF56047">
    <property type="entry name" value="Ribosomal protein S8"/>
    <property type="match status" value="1"/>
</dbReference>
<dbReference type="PROSITE" id="PS00053">
    <property type="entry name" value="RIBOSOMAL_S8"/>
    <property type="match status" value="1"/>
</dbReference>
<organism>
    <name type="scientific">Hahella chejuensis (strain KCTC 2396)</name>
    <dbReference type="NCBI Taxonomy" id="349521"/>
    <lineage>
        <taxon>Bacteria</taxon>
        <taxon>Pseudomonadati</taxon>
        <taxon>Pseudomonadota</taxon>
        <taxon>Gammaproteobacteria</taxon>
        <taxon>Oceanospirillales</taxon>
        <taxon>Hahellaceae</taxon>
        <taxon>Hahella</taxon>
    </lineage>
</organism>
<name>RS8_HAHCH</name>
<accession>Q2S926</accession>
<feature type="chain" id="PRO_0000290848" description="Small ribosomal subunit protein uS8">
    <location>
        <begin position="1"/>
        <end position="130"/>
    </location>
</feature>
<comment type="function">
    <text evidence="1">One of the primary rRNA binding proteins, it binds directly to 16S rRNA central domain where it helps coordinate assembly of the platform of the 30S subunit.</text>
</comment>
<comment type="subunit">
    <text evidence="1">Part of the 30S ribosomal subunit. Contacts proteins S5 and S12.</text>
</comment>
<comment type="similarity">
    <text evidence="1">Belongs to the universal ribosomal protein uS8 family.</text>
</comment>
<keyword id="KW-1185">Reference proteome</keyword>
<keyword id="KW-0687">Ribonucleoprotein</keyword>
<keyword id="KW-0689">Ribosomal protein</keyword>
<keyword id="KW-0694">RNA-binding</keyword>
<keyword id="KW-0699">rRNA-binding</keyword>